<proteinExistence type="evidence at protein level"/>
<feature type="chain" id="PRO_0000418083" description="CRISPR system CMR subunit Cmr7 1">
    <location>
        <begin position="1"/>
        <end position="197"/>
    </location>
</feature>
<feature type="strand" evidence="4">
    <location>
        <begin position="10"/>
        <end position="14"/>
    </location>
</feature>
<feature type="strand" evidence="4">
    <location>
        <begin position="20"/>
        <end position="22"/>
    </location>
</feature>
<feature type="turn" evidence="4">
    <location>
        <begin position="23"/>
        <end position="25"/>
    </location>
</feature>
<feature type="strand" evidence="4">
    <location>
        <begin position="26"/>
        <end position="28"/>
    </location>
</feature>
<feature type="strand" evidence="4">
    <location>
        <begin position="30"/>
        <end position="32"/>
    </location>
</feature>
<feature type="strand" evidence="4">
    <location>
        <begin position="34"/>
        <end position="37"/>
    </location>
</feature>
<feature type="strand" evidence="4">
    <location>
        <begin position="44"/>
        <end position="48"/>
    </location>
</feature>
<feature type="strand" evidence="4">
    <location>
        <begin position="51"/>
        <end position="53"/>
    </location>
</feature>
<feature type="strand" evidence="4">
    <location>
        <begin position="55"/>
        <end position="59"/>
    </location>
</feature>
<feature type="strand" evidence="4">
    <location>
        <begin position="61"/>
        <end position="64"/>
    </location>
</feature>
<feature type="turn" evidence="4">
    <location>
        <begin position="65"/>
        <end position="68"/>
    </location>
</feature>
<feature type="strand" evidence="4">
    <location>
        <begin position="69"/>
        <end position="72"/>
    </location>
</feature>
<feature type="strand" evidence="4">
    <location>
        <begin position="79"/>
        <end position="92"/>
    </location>
</feature>
<feature type="strand" evidence="4">
    <location>
        <begin position="94"/>
        <end position="101"/>
    </location>
</feature>
<feature type="helix" evidence="4">
    <location>
        <begin position="102"/>
        <end position="104"/>
    </location>
</feature>
<feature type="strand" evidence="4">
    <location>
        <begin position="107"/>
        <end position="109"/>
    </location>
</feature>
<feature type="strand" evidence="4">
    <location>
        <begin position="115"/>
        <end position="123"/>
    </location>
</feature>
<feature type="strand" evidence="4">
    <location>
        <begin position="138"/>
        <end position="143"/>
    </location>
</feature>
<feature type="helix" evidence="4">
    <location>
        <begin position="147"/>
        <end position="156"/>
    </location>
</feature>
<feature type="helix" evidence="4">
    <location>
        <begin position="158"/>
        <end position="161"/>
    </location>
</feature>
<feature type="helix" evidence="4">
    <location>
        <begin position="163"/>
        <end position="168"/>
    </location>
</feature>
<feature type="helix" evidence="4">
    <location>
        <begin position="171"/>
        <end position="184"/>
    </location>
</feature>
<feature type="strand" evidence="4">
    <location>
        <begin position="187"/>
        <end position="194"/>
    </location>
</feature>
<name>CMR7A_SACS2</name>
<sequence length="197" mass="22151">MTSGAGWEEQVFLPITNSISSEDNNQIKIGSSVSIEYNQNGQHVSQIDDKGLHNILVLTGYAIDESTGELVPTFDPCDYVKGILISGKILKGNHFKIIGIPSNKLYIIRKKDVHGNITFSLPIKNFNTGTYQVDLRDKVTSFVSLDRDVAKTIVDNVLAKIYAKIYNSLNKEQKDKLYRDVEEIFNYYSIKSLKSNP</sequence>
<evidence type="ECO:0000250" key="1"/>
<evidence type="ECO:0000269" key="2">
    <source>
    </source>
</evidence>
<evidence type="ECO:0000305" key="3"/>
<evidence type="ECO:0007829" key="4">
    <source>
        <dbReference type="PDB" id="2X5Q"/>
    </source>
</evidence>
<comment type="function">
    <text evidence="1 2">CRISPR (clustered regularly interspaced short palindromic repeat) is an adaptive immune system that provides protection against mobile genetic elements (viruses, transposable elements and conjugative plasmids). CRISPR clusters contain spacers, sequences complementary to antecedent mobile elements, and target invading nucleic acids. CRISPR clusters are transcribed and processed into CRISPR RNA (crRNA) (By similarity). The CMR complex degrades RNA complementary to the crRNA (target RNA) within UA dinucleotides, generating 3'-OH and 5'-phosphate ends. Activity is dependent on the 8 nt long 5' tag in the crRNA, an unpaired 3' flag on the target RNA, and is stimulated by ATP. Some cleavage of the guide crRNA can also be observed.</text>
</comment>
<comment type="subunit">
    <text evidence="2">Possible homodimer. Part of the CMR ribonucleoprotein complex, consisting of crRNA plus Cmr1/Cmr2/Cmr3/Cmr4/Cmr5/Cmr6 at 1:1 and possibly 3 Cmr7 dimers. A Cmr2/Cmr3/Cmr7 subcomplex without crRNA can also be isolated. It does not cleave target RNA.</text>
</comment>
<comment type="subcellular location">
    <subcellularLocation>
        <location evidence="2">Cytoplasm</location>
    </subcellularLocation>
</comment>
<comment type="similarity">
    <text evidence="3">Belongs to the CRISPR system Cmr7 family.</text>
</comment>
<protein>
    <recommendedName>
        <fullName>CRISPR system CMR subunit Cmr7 1</fullName>
    </recommendedName>
</protein>
<organism>
    <name type="scientific">Saccharolobus solfataricus (strain ATCC 35092 / DSM 1617 / JCM 11322 / P2)</name>
    <name type="common">Sulfolobus solfataricus</name>
    <dbReference type="NCBI Taxonomy" id="273057"/>
    <lineage>
        <taxon>Archaea</taxon>
        <taxon>Thermoproteota</taxon>
        <taxon>Thermoprotei</taxon>
        <taxon>Sulfolobales</taxon>
        <taxon>Sulfolobaceae</taxon>
        <taxon>Saccharolobus</taxon>
    </lineage>
</organism>
<accession>Q97WX5</accession>
<dbReference type="EMBL" id="AE006641">
    <property type="protein sequence ID" value="AAK42176.1"/>
    <property type="molecule type" value="Genomic_DNA"/>
</dbReference>
<dbReference type="PIR" id="A90365">
    <property type="entry name" value="A90365"/>
</dbReference>
<dbReference type="RefSeq" id="WP_009993002.1">
    <property type="nucleotide sequence ID" value="NC_002754.1"/>
</dbReference>
<dbReference type="PDB" id="2X5Q">
    <property type="method" value="X-ray"/>
    <property type="resolution" value="2.05 A"/>
    <property type="chains" value="A/B=1-197"/>
</dbReference>
<dbReference type="PDBsum" id="2X5Q"/>
<dbReference type="SMR" id="Q97WX5"/>
<dbReference type="STRING" id="273057.SSO1986"/>
<dbReference type="PaxDb" id="273057-SSO1986"/>
<dbReference type="EnsemblBacteria" id="AAK42176">
    <property type="protein sequence ID" value="AAK42176"/>
    <property type="gene ID" value="SSO1986"/>
</dbReference>
<dbReference type="GeneID" id="27428312"/>
<dbReference type="KEGG" id="sso:SSO1986"/>
<dbReference type="PATRIC" id="fig|273057.12.peg.2062"/>
<dbReference type="eggNOG" id="arCOG08552">
    <property type="taxonomic scope" value="Archaea"/>
</dbReference>
<dbReference type="HOGENOM" id="CLU_1472150_0_0_2"/>
<dbReference type="InParanoid" id="Q97WX5"/>
<dbReference type="EvolutionaryTrace" id="Q97WX5"/>
<dbReference type="Proteomes" id="UP000001974">
    <property type="component" value="Chromosome"/>
</dbReference>
<dbReference type="GO" id="GO:0005737">
    <property type="term" value="C:cytoplasm"/>
    <property type="evidence" value="ECO:0007669"/>
    <property type="project" value="UniProtKB-SubCell"/>
</dbReference>
<dbReference type="GO" id="GO:0099048">
    <property type="term" value="P:CRISPR-cas system"/>
    <property type="evidence" value="ECO:0007669"/>
    <property type="project" value="InterPro"/>
</dbReference>
<dbReference type="GO" id="GO:0051607">
    <property type="term" value="P:defense response to virus"/>
    <property type="evidence" value="ECO:0007669"/>
    <property type="project" value="UniProtKB-KW"/>
</dbReference>
<dbReference type="Gene3D" id="2.60.120.1670">
    <property type="match status" value="1"/>
</dbReference>
<dbReference type="InterPro" id="IPR043959">
    <property type="entry name" value="Cmr7A"/>
</dbReference>
<dbReference type="InterPro" id="IPR053743">
    <property type="entry name" value="CRISPR_Cmr7_comp"/>
</dbReference>
<dbReference type="Pfam" id="PF19021">
    <property type="entry name" value="Cmr7A"/>
    <property type="match status" value="1"/>
</dbReference>
<keyword id="KW-0002">3D-structure</keyword>
<keyword id="KW-0051">Antiviral defense</keyword>
<keyword id="KW-0963">Cytoplasm</keyword>
<keyword id="KW-1185">Reference proteome</keyword>
<reference key="1">
    <citation type="journal article" date="2001" name="Proc. Natl. Acad. Sci. U.S.A.">
        <title>The complete genome of the crenarchaeon Sulfolobus solfataricus P2.</title>
        <authorList>
            <person name="She Q."/>
            <person name="Singh R.K."/>
            <person name="Confalonieri F."/>
            <person name="Zivanovic Y."/>
            <person name="Allard G."/>
            <person name="Awayez M.J."/>
            <person name="Chan-Weiher C.C.-Y."/>
            <person name="Clausen I.G."/>
            <person name="Curtis B.A."/>
            <person name="De Moors A."/>
            <person name="Erauso G."/>
            <person name="Fletcher C."/>
            <person name="Gordon P.M.K."/>
            <person name="Heikamp-de Jong I."/>
            <person name="Jeffries A.C."/>
            <person name="Kozera C.J."/>
            <person name="Medina N."/>
            <person name="Peng X."/>
            <person name="Thi-Ngoc H.P."/>
            <person name="Redder P."/>
            <person name="Schenk M.E."/>
            <person name="Theriault C."/>
            <person name="Tolstrup N."/>
            <person name="Charlebois R.L."/>
            <person name="Doolittle W.F."/>
            <person name="Duguet M."/>
            <person name="Gaasterland T."/>
            <person name="Garrett R.A."/>
            <person name="Ragan M.A."/>
            <person name="Sensen C.W."/>
            <person name="Van der Oost J."/>
        </authorList>
    </citation>
    <scope>NUCLEOTIDE SEQUENCE [LARGE SCALE GENOMIC DNA]</scope>
    <source>
        <strain>ATCC 35092 / DSM 1617 / JCM 11322 / P2</strain>
    </source>
</reference>
<reference key="2">
    <citation type="journal article" date="2012" name="Mol. Cell">
        <title>Structure and mechanism of the CMR complex for CRISPR-mediated antiviral immunity.</title>
        <authorList>
            <person name="Zhang J."/>
            <person name="Rouillon C."/>
            <person name="Kerou M."/>
            <person name="Reeks J."/>
            <person name="Brugger K."/>
            <person name="Graham S."/>
            <person name="Reimann J."/>
            <person name="Cannone G."/>
            <person name="Liu H."/>
            <person name="Albers S.V."/>
            <person name="Naismith J.H."/>
            <person name="Spagnolo L."/>
            <person name="White M.F."/>
        </authorList>
    </citation>
    <scope>IDENTIFICATION BY MASS SPECTROMETRY</scope>
    <scope>FUNCTION IN CMR COMPLEX</scope>
    <scope>SUBUNIT</scope>
    <scope>SUBCELLULAR LOCATION</scope>
    <source>
        <strain>ATCC 35092 / DSM 1617 / JCM 11322 / P2</strain>
    </source>
</reference>
<reference key="3">
    <citation type="journal article" date="2010" name="J. Struct. Funct. Genomics">
        <title>The Scottish Structural Proteomics Facility: targets, methods and outputs.</title>
        <authorList>
            <person name="Oke M."/>
            <person name="Carter L.G."/>
            <person name="Johnson K.A."/>
            <person name="Liu H."/>
            <person name="McMahon S.A."/>
            <person name="Yan X."/>
            <person name="Kerou M."/>
            <person name="Weikart N.D."/>
            <person name="Kadi N."/>
            <person name="Sheikh M.A."/>
            <person name="Schmelz S."/>
            <person name="Dorward M."/>
            <person name="Zawadzki M."/>
            <person name="Cozens C."/>
            <person name="Falconer H."/>
            <person name="Powers H."/>
            <person name="Overton I.M."/>
            <person name="van Niekerk C.A."/>
            <person name="Peng X."/>
            <person name="Patel P."/>
            <person name="Garrett R.A."/>
            <person name="Prangishvili D."/>
            <person name="Botting C.H."/>
            <person name="Coote P.J."/>
            <person name="Dryden D.T."/>
            <person name="Barton G.J."/>
            <person name="Schwarz-Linek U."/>
            <person name="Challis G.L."/>
            <person name="Taylor G.L."/>
            <person name="White M.F."/>
            <person name="Naismith J.H."/>
        </authorList>
    </citation>
    <scope>X-RAY CRYSTALLOGRAPHY (2.05 ANGSTROMS)</scope>
</reference>
<gene>
    <name type="primary">cmr7A</name>
    <name type="ordered locus">SSO1986</name>
</gene>